<dbReference type="EC" id="3.4.24.-"/>
<dbReference type="EMBL" id="DS027694">
    <property type="protein sequence ID" value="EAW20350.1"/>
    <property type="molecule type" value="Genomic_DNA"/>
</dbReference>
<dbReference type="RefSeq" id="XP_001262247.1">
    <property type="nucleotide sequence ID" value="XM_001262246.1"/>
</dbReference>
<dbReference type="SMR" id="A1DBW0"/>
<dbReference type="STRING" id="331117.A1DBW0"/>
<dbReference type="MEROPS" id="M36.001"/>
<dbReference type="EnsemblFungi" id="EAW20350">
    <property type="protein sequence ID" value="EAW20350"/>
    <property type="gene ID" value="NFIA_099860"/>
</dbReference>
<dbReference type="GeneID" id="4588767"/>
<dbReference type="KEGG" id="nfi:NFIA_099860"/>
<dbReference type="VEuPathDB" id="FungiDB:NFIA_099860"/>
<dbReference type="eggNOG" id="ENOG502QTDC">
    <property type="taxonomic scope" value="Eukaryota"/>
</dbReference>
<dbReference type="HOGENOM" id="CLU_012703_3_0_1"/>
<dbReference type="OMA" id="IRKDSYT"/>
<dbReference type="OrthoDB" id="3227768at2759"/>
<dbReference type="Proteomes" id="UP000006702">
    <property type="component" value="Unassembled WGS sequence"/>
</dbReference>
<dbReference type="GO" id="GO:0005576">
    <property type="term" value="C:extracellular region"/>
    <property type="evidence" value="ECO:0007669"/>
    <property type="project" value="UniProtKB-SubCell"/>
</dbReference>
<dbReference type="GO" id="GO:0004222">
    <property type="term" value="F:metalloendopeptidase activity"/>
    <property type="evidence" value="ECO:0007669"/>
    <property type="project" value="InterPro"/>
</dbReference>
<dbReference type="GO" id="GO:0008270">
    <property type="term" value="F:zinc ion binding"/>
    <property type="evidence" value="ECO:0007669"/>
    <property type="project" value="InterPro"/>
</dbReference>
<dbReference type="GO" id="GO:0006508">
    <property type="term" value="P:proteolysis"/>
    <property type="evidence" value="ECO:0007669"/>
    <property type="project" value="UniProtKB-KW"/>
</dbReference>
<dbReference type="CDD" id="cd09596">
    <property type="entry name" value="M36"/>
    <property type="match status" value="1"/>
</dbReference>
<dbReference type="Gene3D" id="3.10.170.10">
    <property type="match status" value="1"/>
</dbReference>
<dbReference type="Gene3D" id="1.10.390.10">
    <property type="entry name" value="Neutral Protease Domain 2"/>
    <property type="match status" value="1"/>
</dbReference>
<dbReference type="InterPro" id="IPR011096">
    <property type="entry name" value="FTP_domain"/>
</dbReference>
<dbReference type="InterPro" id="IPR050371">
    <property type="entry name" value="Fungal_virulence_M36"/>
</dbReference>
<dbReference type="InterPro" id="IPR001842">
    <property type="entry name" value="Peptidase_M36"/>
</dbReference>
<dbReference type="InterPro" id="IPR027268">
    <property type="entry name" value="Peptidase_M4/M1_CTD_sf"/>
</dbReference>
<dbReference type="PANTHER" id="PTHR33478">
    <property type="entry name" value="EXTRACELLULAR METALLOPROTEINASE MEP"/>
    <property type="match status" value="1"/>
</dbReference>
<dbReference type="PANTHER" id="PTHR33478:SF1">
    <property type="entry name" value="EXTRACELLULAR METALLOPROTEINASE MEP"/>
    <property type="match status" value="1"/>
</dbReference>
<dbReference type="Pfam" id="PF07504">
    <property type="entry name" value="FTP"/>
    <property type="match status" value="1"/>
</dbReference>
<dbReference type="Pfam" id="PF02128">
    <property type="entry name" value="Peptidase_M36"/>
    <property type="match status" value="1"/>
</dbReference>
<dbReference type="PRINTS" id="PR00999">
    <property type="entry name" value="FUNGALYSIN"/>
</dbReference>
<dbReference type="SUPFAM" id="SSF55486">
    <property type="entry name" value="Metalloproteases ('zincins'), catalytic domain"/>
    <property type="match status" value="1"/>
</dbReference>
<dbReference type="PROSITE" id="PS00142">
    <property type="entry name" value="ZINC_PROTEASE"/>
    <property type="match status" value="1"/>
</dbReference>
<accession>A1DBW0</accession>
<name>MEP_NEOFI</name>
<protein>
    <recommendedName>
        <fullName>Extracellular metalloproteinase MEP</fullName>
        <ecNumber>3.4.24.-</ecNumber>
    </recommendedName>
    <alternativeName>
        <fullName>Elastinolytic metalloproteinase MEP</fullName>
    </alternativeName>
    <alternativeName>
        <fullName>Fungalysin MEP</fullName>
    </alternativeName>
</protein>
<proteinExistence type="evidence at transcript level"/>
<evidence type="ECO:0000250" key="1"/>
<evidence type="ECO:0000255" key="2"/>
<evidence type="ECO:0000255" key="3">
    <source>
        <dbReference type="PROSITE-ProRule" id="PRU10095"/>
    </source>
</evidence>
<evidence type="ECO:0000305" key="4"/>
<gene>
    <name type="primary">MEP</name>
    <name type="ORF">NFIA_099860</name>
</gene>
<keyword id="KW-0378">Hydrolase</keyword>
<keyword id="KW-0479">Metal-binding</keyword>
<keyword id="KW-0482">Metalloprotease</keyword>
<keyword id="KW-0645">Protease</keyword>
<keyword id="KW-1185">Reference proteome</keyword>
<keyword id="KW-0964">Secreted</keyword>
<keyword id="KW-0732">Signal</keyword>
<keyword id="KW-0843">Virulence</keyword>
<keyword id="KW-0862">Zinc</keyword>
<keyword id="KW-0865">Zymogen</keyword>
<feature type="signal peptide" evidence="2">
    <location>
        <begin position="1"/>
        <end position="18"/>
    </location>
</feature>
<feature type="propeptide" id="PRO_0000407189" evidence="1">
    <location>
        <begin position="19"/>
        <end position="245"/>
    </location>
</feature>
<feature type="chain" id="PRO_0000407190" description="Extracellular metalloproteinase MEP">
    <location>
        <begin position="246"/>
        <end position="634"/>
    </location>
</feature>
<feature type="active site" evidence="3">
    <location>
        <position position="430"/>
    </location>
</feature>
<feature type="binding site" evidence="3">
    <location>
        <position position="429"/>
    </location>
    <ligand>
        <name>Zn(2+)</name>
        <dbReference type="ChEBI" id="CHEBI:29105"/>
        <note>catalytic</note>
    </ligand>
</feature>
<feature type="binding site" evidence="3">
    <location>
        <position position="433"/>
    </location>
    <ligand>
        <name>Zn(2+)</name>
        <dbReference type="ChEBI" id="CHEBI:29105"/>
        <note>catalytic</note>
    </ligand>
</feature>
<comment type="function">
    <text evidence="1">Secreted metalloproteinase that allows assimilation of proteinaceous substrates and probably acts as a virulence factor.</text>
</comment>
<comment type="cofactor">
    <cofactor evidence="1">
        <name>Zn(2+)</name>
        <dbReference type="ChEBI" id="CHEBI:29105"/>
    </cofactor>
    <text evidence="1">Binds 1 zinc ion per subunit.</text>
</comment>
<comment type="subcellular location">
    <subcellularLocation>
        <location evidence="1">Secreted</location>
    </subcellularLocation>
</comment>
<comment type="induction">
    <text>Expression is controlled by the prtT transcription factor.</text>
</comment>
<comment type="similarity">
    <text evidence="4">Belongs to the peptidase M36 family.</text>
</comment>
<reference key="1">
    <citation type="journal article" date="2008" name="PLoS Genet.">
        <title>Genomic islands in the pathogenic filamentous fungus Aspergillus fumigatus.</title>
        <authorList>
            <person name="Fedorova N.D."/>
            <person name="Khaldi N."/>
            <person name="Joardar V.S."/>
            <person name="Maiti R."/>
            <person name="Amedeo P."/>
            <person name="Anderson M.J."/>
            <person name="Crabtree J."/>
            <person name="Silva J.C."/>
            <person name="Badger J.H."/>
            <person name="Albarraq A."/>
            <person name="Angiuoli S."/>
            <person name="Bussey H."/>
            <person name="Bowyer P."/>
            <person name="Cotty P.J."/>
            <person name="Dyer P.S."/>
            <person name="Egan A."/>
            <person name="Galens K."/>
            <person name="Fraser-Liggett C.M."/>
            <person name="Haas B.J."/>
            <person name="Inman J.M."/>
            <person name="Kent R."/>
            <person name="Lemieux S."/>
            <person name="Malavazi I."/>
            <person name="Orvis J."/>
            <person name="Roemer T."/>
            <person name="Ronning C.M."/>
            <person name="Sundaram J.P."/>
            <person name="Sutton G."/>
            <person name="Turner G."/>
            <person name="Venter J.C."/>
            <person name="White O.R."/>
            <person name="Whitty B.R."/>
            <person name="Youngman P."/>
            <person name="Wolfe K.H."/>
            <person name="Goldman G.H."/>
            <person name="Wortman J.R."/>
            <person name="Jiang B."/>
            <person name="Denning D.W."/>
            <person name="Nierman W.C."/>
        </authorList>
    </citation>
    <scope>NUCLEOTIDE SEQUENCE [LARGE SCALE GENOMIC DNA]</scope>
    <source>
        <strain>ATCC 1020 / DSM 3700 / CBS 544.65 / FGSC A1164 / JCM 1740 / NRRL 181 / WB 181</strain>
    </source>
</reference>
<organism>
    <name type="scientific">Neosartorya fischeri (strain ATCC 1020 / DSM 3700 / CBS 544.65 / FGSC A1164 / JCM 1740 / NRRL 181 / WB 181)</name>
    <name type="common">Aspergillus fischerianus</name>
    <dbReference type="NCBI Taxonomy" id="331117"/>
    <lineage>
        <taxon>Eukaryota</taxon>
        <taxon>Fungi</taxon>
        <taxon>Dikarya</taxon>
        <taxon>Ascomycota</taxon>
        <taxon>Pezizomycotina</taxon>
        <taxon>Eurotiomycetes</taxon>
        <taxon>Eurotiomycetidae</taxon>
        <taxon>Eurotiales</taxon>
        <taxon>Aspergillaceae</taxon>
        <taxon>Aspergillus</taxon>
        <taxon>Aspergillus subgen. Fumigati</taxon>
    </lineage>
</organism>
<sequence>MRGLLLAGALALPASVFAHPAHQSYGLNRRTVDLNAFRLKSLAKYVNATETVIEAPSSFAPFKQQSYVEAATQHVKMIAPDATFRVVDDHYVGDNGVAHVHFRQTANGLDIDNADFNVNVGKDGKVFSYGNSFYTGQIPSSAALTKRDFSDPVTALKGTTNTLQLPITVDSASSESTEGKESYVFKGVSGTVSDPKANLVYFVKDDGTLALTWRVETDIDSNWLLTYIDAKSGEQIHGVVDYVAEADYQVYAWGINDPTEGERTVVKDPWDSAASEFTWISDGSTKYTTSRGNNGIAQSNPNGGSSYLNNYRPSSSSLSFKYPYSPSSSPPSSYIDASIIQLFYTANTYHDLLYTLGFNEKAGNFEYNTNGQGGRGNDYVILNAQDGSGTNNANFATPPDGQPGRMRMYVWTESTPYRDGSFEAGIVIHEYTHGLSTRLTGGPANSNCLNALESGGMGEGWGDFMATAIRLKPGDKRSTDYTMGEWAANRPGGIRQYPYSTSMSTNPLTYTSVNSLNAVHAIGTVWATMLYEVMWNLIDKHGKNDAPKPTLRDGVPTDGKYLAMKLVIDGMALQPCNPNFVQARDAILDADTALTGGENQCEIWKAFAKRGLGAGAQYSSRNRVGSTEVPSGVC</sequence>